<dbReference type="EMBL" id="DQ336395">
    <property type="protein sequence ID" value="ACD12719.1"/>
    <property type="molecule type" value="Genomic_DNA"/>
</dbReference>
<dbReference type="RefSeq" id="YP_003579818.1">
    <property type="nucleotide sequence ID" value="NC_007787.2"/>
</dbReference>
<dbReference type="SMR" id="P0C5Y0"/>
<dbReference type="GeneID" id="9086873"/>
<dbReference type="GO" id="GO:0005739">
    <property type="term" value="C:mitochondrion"/>
    <property type="evidence" value="ECO:0007669"/>
    <property type="project" value="UniProtKB-SubCell"/>
</dbReference>
<dbReference type="GO" id="GO:0015935">
    <property type="term" value="C:small ribosomal subunit"/>
    <property type="evidence" value="ECO:0007669"/>
    <property type="project" value="InterPro"/>
</dbReference>
<dbReference type="GO" id="GO:0003735">
    <property type="term" value="F:structural constituent of ribosome"/>
    <property type="evidence" value="ECO:0007669"/>
    <property type="project" value="InterPro"/>
</dbReference>
<dbReference type="GO" id="GO:0006412">
    <property type="term" value="P:translation"/>
    <property type="evidence" value="ECO:0007669"/>
    <property type="project" value="InterPro"/>
</dbReference>
<dbReference type="FunFam" id="2.40.50.140:FF:000192">
    <property type="entry name" value="Mitochondrial ribosomal protein S12"/>
    <property type="match status" value="1"/>
</dbReference>
<dbReference type="Gene3D" id="2.40.50.140">
    <property type="entry name" value="Nucleic acid-binding proteins"/>
    <property type="match status" value="1"/>
</dbReference>
<dbReference type="InterPro" id="IPR012340">
    <property type="entry name" value="NA-bd_OB-fold"/>
</dbReference>
<dbReference type="InterPro" id="IPR006032">
    <property type="entry name" value="Ribosomal_uS12"/>
</dbReference>
<dbReference type="InterPro" id="IPR005679">
    <property type="entry name" value="Ribosomal_uS12_bac"/>
</dbReference>
<dbReference type="NCBIfam" id="TIGR00981">
    <property type="entry name" value="rpsL_bact"/>
    <property type="match status" value="1"/>
</dbReference>
<dbReference type="PANTHER" id="PTHR11652">
    <property type="entry name" value="30S RIBOSOMAL PROTEIN S12 FAMILY MEMBER"/>
    <property type="match status" value="1"/>
</dbReference>
<dbReference type="Pfam" id="PF00164">
    <property type="entry name" value="Ribosom_S12_S23"/>
    <property type="match status" value="1"/>
</dbReference>
<dbReference type="PIRSF" id="PIRSF002133">
    <property type="entry name" value="Ribosomal_S12/S23"/>
    <property type="match status" value="1"/>
</dbReference>
<dbReference type="PRINTS" id="PR01034">
    <property type="entry name" value="RIBOSOMALS12"/>
</dbReference>
<dbReference type="SUPFAM" id="SSF50249">
    <property type="entry name" value="Nucleic acid-binding proteins"/>
    <property type="match status" value="1"/>
</dbReference>
<dbReference type="PROSITE" id="PS00055">
    <property type="entry name" value="RIBOSOMAL_S12"/>
    <property type="match status" value="1"/>
</dbReference>
<sequence length="140" mass="16114">MITLNQIKDRKARGSKKKRKTLLTGYPQKKGFCVKVYVTKPKKPNSAIRKVAKVTIRLKNKRKNLIAYIPGFGPHNLQPLSTVLIKGGRCQDLPGVKYRLVRKHYDFQIAERFPRKNRRSKFSVKNEKLKAKKGTAVRIG</sequence>
<reference key="1">
    <citation type="journal article" date="2008" name="Mol. Biol. Evol.">
        <title>Mitochondrial genome evolution in the social amoebae.</title>
        <authorList>
            <person name="Heidel A.J."/>
            <person name="Gloeckner G."/>
        </authorList>
    </citation>
    <scope>NUCLEOTIDE SEQUENCE [LARGE SCALE GENOMIC DNA]</scope>
</reference>
<keyword id="KW-0496">Mitochondrion</keyword>
<keyword id="KW-0687">Ribonucleoprotein</keyword>
<keyword id="KW-0689">Ribosomal protein</keyword>
<feature type="chain" id="PRO_0000312399" description="Small ribosomal subunit protein uS12m">
    <location>
        <begin position="1"/>
        <end position="140"/>
    </location>
</feature>
<gene>
    <name type="primary">mrps12</name>
    <name type="synonym">rps12</name>
</gene>
<geneLocation type="mitochondrion"/>
<proteinExistence type="inferred from homology"/>
<name>RT12_DICCI</name>
<comment type="subcellular location">
    <subcellularLocation>
        <location>Mitochondrion</location>
    </subcellularLocation>
</comment>
<comment type="similarity">
    <text evidence="1">Belongs to the universal ribosomal protein uS12 family.</text>
</comment>
<evidence type="ECO:0000305" key="1"/>
<protein>
    <recommendedName>
        <fullName evidence="1">Small ribosomal subunit protein uS12m</fullName>
    </recommendedName>
    <alternativeName>
        <fullName>Ribosomal protein S12, mitochondrial</fullName>
    </alternativeName>
</protein>
<accession>P0C5Y0</accession>
<accession>B2VQ33</accession>
<organism>
    <name type="scientific">Dictyostelium citrinum</name>
    <name type="common">Slime mold</name>
    <dbReference type="NCBI Taxonomy" id="361072"/>
    <lineage>
        <taxon>Eukaryota</taxon>
        <taxon>Amoebozoa</taxon>
        <taxon>Evosea</taxon>
        <taxon>Eumycetozoa</taxon>
        <taxon>Dictyostelia</taxon>
        <taxon>Dictyosteliales</taxon>
        <taxon>Dictyosteliaceae</taxon>
        <taxon>Dictyostelium</taxon>
    </lineage>
</organism>